<dbReference type="EMBL" id="X86792">
    <property type="protein sequence ID" value="CAA60491.1"/>
    <property type="molecule type" value="Genomic_DNA"/>
</dbReference>
<dbReference type="PIR" id="A02421">
    <property type="entry name" value="HEPG"/>
</dbReference>
<dbReference type="RefSeq" id="NP_999612.1">
    <property type="nucleotide sequence ID" value="NM_214447.1"/>
</dbReference>
<dbReference type="SMR" id="P02101"/>
<dbReference type="FunCoup" id="P02101">
    <property type="interactions" value="774"/>
</dbReference>
<dbReference type="STRING" id="9823.ENSSSCP00000015648"/>
<dbReference type="PaxDb" id="9823-ENSSSCP00000015648"/>
<dbReference type="PeptideAtlas" id="P02101"/>
<dbReference type="GeneID" id="407067"/>
<dbReference type="KEGG" id="ssc:407067"/>
<dbReference type="CTD" id="3046"/>
<dbReference type="eggNOG" id="KOG3378">
    <property type="taxonomic scope" value="Eukaryota"/>
</dbReference>
<dbReference type="InParanoid" id="P02101"/>
<dbReference type="OrthoDB" id="9886081at2759"/>
<dbReference type="Proteomes" id="UP000008227">
    <property type="component" value="Unplaced"/>
</dbReference>
<dbReference type="Proteomes" id="UP000314985">
    <property type="component" value="Unplaced"/>
</dbReference>
<dbReference type="Proteomes" id="UP000694570">
    <property type="component" value="Unplaced"/>
</dbReference>
<dbReference type="Proteomes" id="UP000694571">
    <property type="component" value="Unplaced"/>
</dbReference>
<dbReference type="Proteomes" id="UP000694720">
    <property type="component" value="Unplaced"/>
</dbReference>
<dbReference type="Proteomes" id="UP000694722">
    <property type="component" value="Unplaced"/>
</dbReference>
<dbReference type="Proteomes" id="UP000694723">
    <property type="component" value="Unplaced"/>
</dbReference>
<dbReference type="Proteomes" id="UP000694724">
    <property type="component" value="Unplaced"/>
</dbReference>
<dbReference type="Proteomes" id="UP000694725">
    <property type="component" value="Unplaced"/>
</dbReference>
<dbReference type="Proteomes" id="UP000694726">
    <property type="component" value="Unplaced"/>
</dbReference>
<dbReference type="Proteomes" id="UP000694727">
    <property type="component" value="Unplaced"/>
</dbReference>
<dbReference type="Proteomes" id="UP000694728">
    <property type="component" value="Unplaced"/>
</dbReference>
<dbReference type="GO" id="GO:0031838">
    <property type="term" value="C:haptoglobin-hemoglobin complex"/>
    <property type="evidence" value="ECO:0000318"/>
    <property type="project" value="GO_Central"/>
</dbReference>
<dbReference type="GO" id="GO:0005833">
    <property type="term" value="C:hemoglobin complex"/>
    <property type="evidence" value="ECO:0000318"/>
    <property type="project" value="GO_Central"/>
</dbReference>
<dbReference type="GO" id="GO:0020037">
    <property type="term" value="F:heme binding"/>
    <property type="evidence" value="ECO:0000318"/>
    <property type="project" value="GO_Central"/>
</dbReference>
<dbReference type="GO" id="GO:0031721">
    <property type="term" value="F:hemoglobin alpha binding"/>
    <property type="evidence" value="ECO:0000318"/>
    <property type="project" value="GO_Central"/>
</dbReference>
<dbReference type="GO" id="GO:0046872">
    <property type="term" value="F:metal ion binding"/>
    <property type="evidence" value="ECO:0007669"/>
    <property type="project" value="UniProtKB-KW"/>
</dbReference>
<dbReference type="GO" id="GO:0019825">
    <property type="term" value="F:oxygen binding"/>
    <property type="evidence" value="ECO:0000318"/>
    <property type="project" value="GO_Central"/>
</dbReference>
<dbReference type="GO" id="GO:0005344">
    <property type="term" value="F:oxygen carrier activity"/>
    <property type="evidence" value="ECO:0000318"/>
    <property type="project" value="GO_Central"/>
</dbReference>
<dbReference type="GO" id="GO:0098869">
    <property type="term" value="P:cellular oxidant detoxification"/>
    <property type="evidence" value="ECO:0007669"/>
    <property type="project" value="GOC"/>
</dbReference>
<dbReference type="GO" id="GO:0042744">
    <property type="term" value="P:hydrogen peroxide catabolic process"/>
    <property type="evidence" value="ECO:0000318"/>
    <property type="project" value="GO_Central"/>
</dbReference>
<dbReference type="CDD" id="cd08925">
    <property type="entry name" value="Hb-beta-like"/>
    <property type="match status" value="1"/>
</dbReference>
<dbReference type="FunFam" id="1.10.490.10:FF:000001">
    <property type="entry name" value="Hemoglobin subunit beta"/>
    <property type="match status" value="1"/>
</dbReference>
<dbReference type="Gene3D" id="1.10.490.10">
    <property type="entry name" value="Globins"/>
    <property type="match status" value="1"/>
</dbReference>
<dbReference type="InterPro" id="IPR000971">
    <property type="entry name" value="Globin"/>
</dbReference>
<dbReference type="InterPro" id="IPR009050">
    <property type="entry name" value="Globin-like_sf"/>
</dbReference>
<dbReference type="InterPro" id="IPR012292">
    <property type="entry name" value="Globin/Proto"/>
</dbReference>
<dbReference type="InterPro" id="IPR002337">
    <property type="entry name" value="Hemoglobin_b"/>
</dbReference>
<dbReference type="InterPro" id="IPR050056">
    <property type="entry name" value="Hemoglobin_oxygen_transport"/>
</dbReference>
<dbReference type="PANTHER" id="PTHR11442">
    <property type="entry name" value="HEMOGLOBIN FAMILY MEMBER"/>
    <property type="match status" value="1"/>
</dbReference>
<dbReference type="PANTHER" id="PTHR11442:SF7">
    <property type="entry name" value="HEMOGLOBIN SUBUNIT EPSILON"/>
    <property type="match status" value="1"/>
</dbReference>
<dbReference type="Pfam" id="PF00042">
    <property type="entry name" value="Globin"/>
    <property type="match status" value="1"/>
</dbReference>
<dbReference type="PRINTS" id="PR00814">
    <property type="entry name" value="BETAHAEM"/>
</dbReference>
<dbReference type="SUPFAM" id="SSF46458">
    <property type="entry name" value="Globin-like"/>
    <property type="match status" value="1"/>
</dbReference>
<dbReference type="PROSITE" id="PS01033">
    <property type="entry name" value="GLOBIN"/>
    <property type="match status" value="1"/>
</dbReference>
<name>HBE_PIG</name>
<keyword id="KW-0903">Direct protein sequencing</keyword>
<keyword id="KW-0349">Heme</keyword>
<keyword id="KW-0408">Iron</keyword>
<keyword id="KW-0479">Metal-binding</keyword>
<keyword id="KW-0561">Oxygen transport</keyword>
<keyword id="KW-0597">Phosphoprotein</keyword>
<keyword id="KW-1185">Reference proteome</keyword>
<keyword id="KW-0813">Transport</keyword>
<accession>P02101</accession>
<accession>Q29039</accession>
<evidence type="ECO:0000250" key="1">
    <source>
        <dbReference type="UniProtKB" id="P02100"/>
    </source>
</evidence>
<evidence type="ECO:0000255" key="2">
    <source>
        <dbReference type="PROSITE-ProRule" id="PRU00238"/>
    </source>
</evidence>
<evidence type="ECO:0000269" key="3">
    <source>
    </source>
</evidence>
<evidence type="ECO:0000305" key="4"/>
<proteinExistence type="evidence at protein level"/>
<gene>
    <name type="primary">HBE1</name>
</gene>
<sequence length="147" mass="16095">MVHFTAEEKSVITGLWGKVNVEETGGQAVGRLLVVYPWTQRFFDSFGNMSSPSAIMGNPKVKAHGKKVLTAFGDAVKNMDNLKGTFAKLSELHCDKLHVDPENFRLLGNMIVIILASHFGGEFTPEVQAAWQKLVAGVATALAHKYH</sequence>
<reference key="1">
    <citation type="submission" date="1995-05" db="EMBL/GenBank/DDBJ databases">
        <authorList>
            <person name="Sharma A."/>
            <person name="Parson C.T."/>
            <person name="Midha S."/>
            <person name="Okabe J."/>
            <person name="Yerle M."/>
            <person name="Pinton P."/>
            <person name="Logan J."/>
            <person name="Kumar L.R."/>
        </authorList>
    </citation>
    <scope>NUCLEOTIDE SEQUENCE [GENOMIC DNA]</scope>
</reference>
<reference key="2">
    <citation type="journal article" date="1984" name="Hoppe-Seyler's Z. Physiol. Chem.">
        <title>Pre- and perinatal oxygen transport in mammals: the embryonic hemoglobins of the domestic pig (Sus scrofa domestica).</title>
        <authorList>
            <person name="Bieber F.A."/>
            <person name="Braunitzer G."/>
        </authorList>
    </citation>
    <scope>PROTEIN SEQUENCE OF 2-147</scope>
</reference>
<organism>
    <name type="scientific">Sus scrofa</name>
    <name type="common">Pig</name>
    <dbReference type="NCBI Taxonomy" id="9823"/>
    <lineage>
        <taxon>Eukaryota</taxon>
        <taxon>Metazoa</taxon>
        <taxon>Chordata</taxon>
        <taxon>Craniata</taxon>
        <taxon>Vertebrata</taxon>
        <taxon>Euteleostomi</taxon>
        <taxon>Mammalia</taxon>
        <taxon>Eutheria</taxon>
        <taxon>Laurasiatheria</taxon>
        <taxon>Artiodactyla</taxon>
        <taxon>Suina</taxon>
        <taxon>Suidae</taxon>
        <taxon>Sus</taxon>
    </lineage>
</organism>
<protein>
    <recommendedName>
        <fullName>Hemoglobin subunit epsilon</fullName>
    </recommendedName>
    <alternativeName>
        <fullName>Epsilon-globin</fullName>
    </alternativeName>
    <alternativeName>
        <fullName>Hemoglobin epsilon chain</fullName>
    </alternativeName>
</protein>
<comment type="function">
    <text>Hemoglobin epsilon chain is a beta-type chain found in early embryos.</text>
</comment>
<comment type="tissue specificity">
    <text>Red blood cells.</text>
</comment>
<comment type="similarity">
    <text evidence="2">Belongs to the globin family.</text>
</comment>
<feature type="initiator methionine" description="Removed" evidence="3">
    <location>
        <position position="1"/>
    </location>
</feature>
<feature type="chain" id="PRO_0000053222" description="Hemoglobin subunit epsilon">
    <location>
        <begin position="2"/>
        <end position="147"/>
    </location>
</feature>
<feature type="domain" description="Globin" evidence="2">
    <location>
        <begin position="3"/>
        <end position="147"/>
    </location>
</feature>
<feature type="binding site" description="distal binding residue" evidence="2">
    <location>
        <position position="64"/>
    </location>
    <ligand>
        <name>heme b</name>
        <dbReference type="ChEBI" id="CHEBI:60344"/>
    </ligand>
    <ligandPart>
        <name>Fe</name>
        <dbReference type="ChEBI" id="CHEBI:18248"/>
    </ligandPart>
</feature>
<feature type="binding site" description="proximal binding residue" evidence="2">
    <location>
        <position position="93"/>
    </location>
    <ligand>
        <name>heme b</name>
        <dbReference type="ChEBI" id="CHEBI:60344"/>
    </ligand>
    <ligandPart>
        <name>Fe</name>
        <dbReference type="ChEBI" id="CHEBI:18248"/>
    </ligandPart>
</feature>
<feature type="modified residue" description="Phosphoserine" evidence="1">
    <location>
        <position position="51"/>
    </location>
</feature>
<feature type="sequence conflict" description="In Ref. 2; AA sequence." evidence="4" ref="2">
    <original>S</original>
    <variation>A</variation>
    <location>
        <position position="10"/>
    </location>
</feature>
<feature type="sequence conflict" description="In Ref. 2; AA sequence." evidence="4" ref="2">
    <original>GK</original>
    <variation>SR</variation>
    <location>
        <begin position="17"/>
        <end position="18"/>
    </location>
</feature>
<feature type="sequence conflict" description="In Ref. 2; AA sequence." evidence="4" ref="2">
    <original>Q</original>
    <variation>E</variation>
    <location>
        <position position="27"/>
    </location>
</feature>
<feature type="sequence conflict" description="In Ref. 2; AA sequence." evidence="4" ref="2">
    <original>A</original>
    <variation>S</variation>
    <location>
        <position position="71"/>
    </location>
</feature>
<feature type="sequence conflict" description="In Ref. 2; AA sequence." evidence="4" ref="2">
    <original>G</original>
    <variation>R</variation>
    <location>
        <position position="121"/>
    </location>
</feature>